<dbReference type="EC" id="7.3.2.3" evidence="1"/>
<dbReference type="EMBL" id="AE016825">
    <property type="protein sequence ID" value="AAQ59502.1"/>
    <property type="molecule type" value="Genomic_DNA"/>
</dbReference>
<dbReference type="RefSeq" id="WP_011135380.1">
    <property type="nucleotide sequence ID" value="NC_005085.1"/>
</dbReference>
<dbReference type="SMR" id="Q7NX01"/>
<dbReference type="STRING" id="243365.CV_1828"/>
<dbReference type="KEGG" id="cvi:CV_1828"/>
<dbReference type="eggNOG" id="COG1118">
    <property type="taxonomic scope" value="Bacteria"/>
</dbReference>
<dbReference type="HOGENOM" id="CLU_000604_1_1_4"/>
<dbReference type="OrthoDB" id="5298774at2"/>
<dbReference type="Proteomes" id="UP000001424">
    <property type="component" value="Chromosome"/>
</dbReference>
<dbReference type="GO" id="GO:0043190">
    <property type="term" value="C:ATP-binding cassette (ABC) transporter complex"/>
    <property type="evidence" value="ECO:0007669"/>
    <property type="project" value="InterPro"/>
</dbReference>
<dbReference type="GO" id="GO:0015419">
    <property type="term" value="F:ABC-type sulfate transporter activity"/>
    <property type="evidence" value="ECO:0007669"/>
    <property type="project" value="InterPro"/>
</dbReference>
<dbReference type="GO" id="GO:0102025">
    <property type="term" value="F:ABC-type thiosulfate transporter activity"/>
    <property type="evidence" value="ECO:0007669"/>
    <property type="project" value="RHEA"/>
</dbReference>
<dbReference type="GO" id="GO:0005524">
    <property type="term" value="F:ATP binding"/>
    <property type="evidence" value="ECO:0007669"/>
    <property type="project" value="UniProtKB-KW"/>
</dbReference>
<dbReference type="GO" id="GO:0016887">
    <property type="term" value="F:ATP hydrolysis activity"/>
    <property type="evidence" value="ECO:0007669"/>
    <property type="project" value="InterPro"/>
</dbReference>
<dbReference type="CDD" id="cd03296">
    <property type="entry name" value="ABC_CysA_sulfate_importer"/>
    <property type="match status" value="1"/>
</dbReference>
<dbReference type="FunFam" id="3.40.50.300:FF:000227">
    <property type="entry name" value="Sulfate/thiosulfate import ATP-binding protein CysA"/>
    <property type="match status" value="1"/>
</dbReference>
<dbReference type="Gene3D" id="3.40.50.300">
    <property type="entry name" value="P-loop containing nucleotide triphosphate hydrolases"/>
    <property type="match status" value="1"/>
</dbReference>
<dbReference type="InterPro" id="IPR003593">
    <property type="entry name" value="AAA+_ATPase"/>
</dbReference>
<dbReference type="InterPro" id="IPR050093">
    <property type="entry name" value="ABC_SmlMolc_Importer"/>
</dbReference>
<dbReference type="InterPro" id="IPR003439">
    <property type="entry name" value="ABC_transporter-like_ATP-bd"/>
</dbReference>
<dbReference type="InterPro" id="IPR017871">
    <property type="entry name" value="ABC_transporter-like_CS"/>
</dbReference>
<dbReference type="InterPro" id="IPR008995">
    <property type="entry name" value="Mo/tungstate-bd_C_term_dom"/>
</dbReference>
<dbReference type="InterPro" id="IPR027417">
    <property type="entry name" value="P-loop_NTPase"/>
</dbReference>
<dbReference type="InterPro" id="IPR005666">
    <property type="entry name" value="Sulph_transpt1"/>
</dbReference>
<dbReference type="InterPro" id="IPR024765">
    <property type="entry name" value="TOBE-like"/>
</dbReference>
<dbReference type="NCBIfam" id="TIGR00968">
    <property type="entry name" value="3a0106s01"/>
    <property type="match status" value="1"/>
</dbReference>
<dbReference type="PANTHER" id="PTHR42781">
    <property type="entry name" value="SPERMIDINE/PUTRESCINE IMPORT ATP-BINDING PROTEIN POTA"/>
    <property type="match status" value="1"/>
</dbReference>
<dbReference type="PANTHER" id="PTHR42781:SF4">
    <property type="entry name" value="SPERMIDINE_PUTRESCINE IMPORT ATP-BINDING PROTEIN POTA"/>
    <property type="match status" value="1"/>
</dbReference>
<dbReference type="Pfam" id="PF00005">
    <property type="entry name" value="ABC_tran"/>
    <property type="match status" value="1"/>
</dbReference>
<dbReference type="Pfam" id="PF12857">
    <property type="entry name" value="TOBE_3"/>
    <property type="match status" value="1"/>
</dbReference>
<dbReference type="SMART" id="SM00382">
    <property type="entry name" value="AAA"/>
    <property type="match status" value="1"/>
</dbReference>
<dbReference type="SUPFAM" id="SSF50331">
    <property type="entry name" value="MOP-like"/>
    <property type="match status" value="1"/>
</dbReference>
<dbReference type="SUPFAM" id="SSF52540">
    <property type="entry name" value="P-loop containing nucleoside triphosphate hydrolases"/>
    <property type="match status" value="1"/>
</dbReference>
<dbReference type="PROSITE" id="PS00211">
    <property type="entry name" value="ABC_TRANSPORTER_1"/>
    <property type="match status" value="1"/>
</dbReference>
<dbReference type="PROSITE" id="PS50893">
    <property type="entry name" value="ABC_TRANSPORTER_2"/>
    <property type="match status" value="1"/>
</dbReference>
<dbReference type="PROSITE" id="PS51237">
    <property type="entry name" value="CYSA"/>
    <property type="match status" value="1"/>
</dbReference>
<reference key="1">
    <citation type="journal article" date="2003" name="Proc. Natl. Acad. Sci. U.S.A.">
        <title>The complete genome sequence of Chromobacterium violaceum reveals remarkable and exploitable bacterial adaptability.</title>
        <authorList>
            <person name="Vasconcelos A.T.R."/>
            <person name="de Almeida D.F."/>
            <person name="Hungria M."/>
            <person name="Guimaraes C.T."/>
            <person name="Antonio R.V."/>
            <person name="Almeida F.C."/>
            <person name="de Almeida L.G.P."/>
            <person name="de Almeida R."/>
            <person name="Alves-Gomes J.A."/>
            <person name="Andrade E.M."/>
            <person name="Araripe J."/>
            <person name="de Araujo M.F.F."/>
            <person name="Astolfi-Filho S."/>
            <person name="Azevedo V."/>
            <person name="Baptista A.J."/>
            <person name="Bataus L.A.M."/>
            <person name="Batista J.S."/>
            <person name="Belo A."/>
            <person name="van den Berg C."/>
            <person name="Bogo M."/>
            <person name="Bonatto S."/>
            <person name="Bordignon J."/>
            <person name="Brigido M.M."/>
            <person name="Brito C.A."/>
            <person name="Brocchi M."/>
            <person name="Burity H.A."/>
            <person name="Camargo A.A."/>
            <person name="Cardoso D.D.P."/>
            <person name="Carneiro N.P."/>
            <person name="Carraro D.M."/>
            <person name="Carvalho C.M.B."/>
            <person name="Cascardo J.C.M."/>
            <person name="Cavada B.S."/>
            <person name="Chueire L.M.O."/>
            <person name="Creczynski-Pasa T.B."/>
            <person name="Cunha-Junior N.C."/>
            <person name="Fagundes N."/>
            <person name="Falcao C.L."/>
            <person name="Fantinatti F."/>
            <person name="Farias I.P."/>
            <person name="Felipe M.S.S."/>
            <person name="Ferrari L.P."/>
            <person name="Ferro J.A."/>
            <person name="Ferro M.I.T."/>
            <person name="Franco G.R."/>
            <person name="Freitas N.S.A."/>
            <person name="Furlan L.R."/>
            <person name="Gazzinelli R.T."/>
            <person name="Gomes E.A."/>
            <person name="Goncalves P.R."/>
            <person name="Grangeiro T.B."/>
            <person name="Grattapaglia D."/>
            <person name="Grisard E.C."/>
            <person name="Hanna E.S."/>
            <person name="Jardim S.N."/>
            <person name="Laurino J."/>
            <person name="Leoi L.C.T."/>
            <person name="Lima L.F.A."/>
            <person name="Loureiro M.F."/>
            <person name="Lyra M.C.C.P."/>
            <person name="Madeira H.M.F."/>
            <person name="Manfio G.P."/>
            <person name="Maranhao A.Q."/>
            <person name="Martins W.S."/>
            <person name="di Mauro S.M.Z."/>
            <person name="de Medeiros S.R.B."/>
            <person name="Meissner R.V."/>
            <person name="Moreira M.A.M."/>
            <person name="Nascimento F.F."/>
            <person name="Nicolas M.F."/>
            <person name="Oliveira J.G."/>
            <person name="Oliveira S.C."/>
            <person name="Paixao R.F.C."/>
            <person name="Parente J.A."/>
            <person name="Pedrosa F.O."/>
            <person name="Pena S.D.J."/>
            <person name="Pereira J.O."/>
            <person name="Pereira M."/>
            <person name="Pinto L.S.R.C."/>
            <person name="Pinto L.S."/>
            <person name="Porto J.I.R."/>
            <person name="Potrich D.P."/>
            <person name="Ramalho-Neto C.E."/>
            <person name="Reis A.M.M."/>
            <person name="Rigo L.U."/>
            <person name="Rondinelli E."/>
            <person name="Santos E.B.P."/>
            <person name="Santos F.R."/>
            <person name="Schneider M.P.C."/>
            <person name="Seuanez H.N."/>
            <person name="Silva A.M.R."/>
            <person name="da Silva A.L.C."/>
            <person name="Silva D.W."/>
            <person name="Silva R."/>
            <person name="Simoes I.C."/>
            <person name="Simon D."/>
            <person name="Soares C.M.A."/>
            <person name="Soares R.B.A."/>
            <person name="Souza E.M."/>
            <person name="Souza K.R.L."/>
            <person name="Souza R.C."/>
            <person name="Steffens M.B.R."/>
            <person name="Steindel M."/>
            <person name="Teixeira S.R."/>
            <person name="Urmenyi T."/>
            <person name="Vettore A."/>
            <person name="Wassem R."/>
            <person name="Zaha A."/>
            <person name="Simpson A.J.G."/>
        </authorList>
    </citation>
    <scope>NUCLEOTIDE SEQUENCE [LARGE SCALE GENOMIC DNA]</scope>
    <source>
        <strain>ATCC 12472 / DSM 30191 / JCM 1249 / CCUG 213 / NBRC 12614 / NCIMB 9131 / NCTC 9757 / MK</strain>
    </source>
</reference>
<proteinExistence type="inferred from homology"/>
<name>CYSA1_CHRVO</name>
<feature type="chain" id="PRO_0000092263" description="Sulfate/thiosulfate import ATP-binding protein CysA 1">
    <location>
        <begin position="1"/>
        <end position="358"/>
    </location>
</feature>
<feature type="domain" description="ABC transporter" evidence="1">
    <location>
        <begin position="3"/>
        <end position="237"/>
    </location>
</feature>
<feature type="binding site" evidence="1">
    <location>
        <begin position="35"/>
        <end position="42"/>
    </location>
    <ligand>
        <name>ATP</name>
        <dbReference type="ChEBI" id="CHEBI:30616"/>
    </ligand>
</feature>
<comment type="function">
    <text evidence="1">Part of the ABC transporter complex CysAWTP involved in sulfate/thiosulfate import. Responsible for energy coupling to the transport system.</text>
</comment>
<comment type="catalytic activity">
    <reaction evidence="1">
        <text>sulfate(out) + ATP + H2O = sulfate(in) + ADP + phosphate + H(+)</text>
        <dbReference type="Rhea" id="RHEA:10192"/>
        <dbReference type="ChEBI" id="CHEBI:15377"/>
        <dbReference type="ChEBI" id="CHEBI:15378"/>
        <dbReference type="ChEBI" id="CHEBI:16189"/>
        <dbReference type="ChEBI" id="CHEBI:30616"/>
        <dbReference type="ChEBI" id="CHEBI:43474"/>
        <dbReference type="ChEBI" id="CHEBI:456216"/>
        <dbReference type="EC" id="7.3.2.3"/>
    </reaction>
</comment>
<comment type="catalytic activity">
    <reaction evidence="1">
        <text>thiosulfate(out) + ATP + H2O = thiosulfate(in) + ADP + phosphate + H(+)</text>
        <dbReference type="Rhea" id="RHEA:29871"/>
        <dbReference type="ChEBI" id="CHEBI:15377"/>
        <dbReference type="ChEBI" id="CHEBI:15378"/>
        <dbReference type="ChEBI" id="CHEBI:30616"/>
        <dbReference type="ChEBI" id="CHEBI:33542"/>
        <dbReference type="ChEBI" id="CHEBI:43474"/>
        <dbReference type="ChEBI" id="CHEBI:456216"/>
        <dbReference type="EC" id="7.3.2.3"/>
    </reaction>
</comment>
<comment type="subunit">
    <text evidence="1">The complex is composed of two ATP-binding proteins (CysA), two transmembrane proteins (CysT and CysW) and a solute-binding protein (CysP).</text>
</comment>
<comment type="subcellular location">
    <subcellularLocation>
        <location evidence="1">Cell inner membrane</location>
        <topology evidence="1">Peripheral membrane protein</topology>
    </subcellularLocation>
</comment>
<comment type="similarity">
    <text evidence="1">Belongs to the ABC transporter superfamily. Sulfate/tungstate importer (TC 3.A.1.6) family.</text>
</comment>
<gene>
    <name evidence="1" type="primary">cysA1</name>
    <name type="ordered locus">CV_1828</name>
</gene>
<sequence>MSIQVENIRKAFGDFVALNDISLNFPGGELVALLGPSGCGKTTLLRIIAGLEQADAGRVLLDGQDASATHVRERQVGFVFQHYALFRHMTVFDNVAFGLRMKPRRERPSEAEIARKVHALLDLVQLDWLADRLPAQLSGGQRQRIALARALAVEPRVLLLDEPFGALDAKVRKELRRWLRKLHDELHITSLFVTHDQEEALEVADRVVLMNHGKVEQIGSPAEVYSQPASAFVYGFLGSANRIRGVSATGAVAVGGQTLAADHQLPHGQPVEAFIRPHELAILPEHGAGLPARVQRVLTLGGLSRIELEGRDELAGQSFDAELPADAPLLAELAVGQAVRLQARAARVFAADPQGGEA</sequence>
<keyword id="KW-0067">ATP-binding</keyword>
<keyword id="KW-0997">Cell inner membrane</keyword>
<keyword id="KW-1003">Cell membrane</keyword>
<keyword id="KW-0472">Membrane</keyword>
<keyword id="KW-0547">Nucleotide-binding</keyword>
<keyword id="KW-1185">Reference proteome</keyword>
<keyword id="KW-0764">Sulfate transport</keyword>
<keyword id="KW-1278">Translocase</keyword>
<keyword id="KW-0813">Transport</keyword>
<organism>
    <name type="scientific">Chromobacterium violaceum (strain ATCC 12472 / DSM 30191 / JCM 1249 / CCUG 213 / NBRC 12614 / NCIMB 9131 / NCTC 9757 / MK)</name>
    <dbReference type="NCBI Taxonomy" id="243365"/>
    <lineage>
        <taxon>Bacteria</taxon>
        <taxon>Pseudomonadati</taxon>
        <taxon>Pseudomonadota</taxon>
        <taxon>Betaproteobacteria</taxon>
        <taxon>Neisseriales</taxon>
        <taxon>Chromobacteriaceae</taxon>
        <taxon>Chromobacterium</taxon>
    </lineage>
</organism>
<accession>Q7NX01</accession>
<protein>
    <recommendedName>
        <fullName evidence="1">Sulfate/thiosulfate import ATP-binding protein CysA 1</fullName>
        <ecNumber evidence="1">7.3.2.3</ecNumber>
    </recommendedName>
    <alternativeName>
        <fullName evidence="1">Sulfate-transporting ATPase 1</fullName>
    </alternativeName>
</protein>
<evidence type="ECO:0000255" key="1">
    <source>
        <dbReference type="HAMAP-Rule" id="MF_01701"/>
    </source>
</evidence>